<accession>P0AAE6</accession>
<accession>P77429</accession>
<dbReference type="EMBL" id="AE014075">
    <property type="protein sequence ID" value="AAN80457.1"/>
    <property type="status" value="ALT_INIT"/>
    <property type="molecule type" value="Genomic_DNA"/>
</dbReference>
<dbReference type="RefSeq" id="WP_000412379.1">
    <property type="nucleotide sequence ID" value="NZ_CP051263.1"/>
</dbReference>
<dbReference type="SMR" id="P0AAE6"/>
<dbReference type="STRING" id="199310.c1997"/>
<dbReference type="KEGG" id="ecc:c1997"/>
<dbReference type="eggNOG" id="COG0531">
    <property type="taxonomic scope" value="Bacteria"/>
</dbReference>
<dbReference type="HOGENOM" id="CLU_007946_1_2_6"/>
<dbReference type="Proteomes" id="UP000001410">
    <property type="component" value="Chromosome"/>
</dbReference>
<dbReference type="GO" id="GO:0005886">
    <property type="term" value="C:plasma membrane"/>
    <property type="evidence" value="ECO:0007669"/>
    <property type="project" value="UniProtKB-SubCell"/>
</dbReference>
<dbReference type="GO" id="GO:0015297">
    <property type="term" value="F:antiporter activity"/>
    <property type="evidence" value="ECO:0007669"/>
    <property type="project" value="UniProtKB-KW"/>
</dbReference>
<dbReference type="GO" id="GO:0006865">
    <property type="term" value="P:amino acid transport"/>
    <property type="evidence" value="ECO:0007669"/>
    <property type="project" value="UniProtKB-KW"/>
</dbReference>
<dbReference type="FunFam" id="1.20.1740.10:FF:000012">
    <property type="entry name" value="Arginine/ornithine antiporter transporter"/>
    <property type="match status" value="1"/>
</dbReference>
<dbReference type="Gene3D" id="1.20.1740.10">
    <property type="entry name" value="Amino acid/polyamine transporter I"/>
    <property type="match status" value="1"/>
</dbReference>
<dbReference type="InterPro" id="IPR002293">
    <property type="entry name" value="AA/rel_permease1"/>
</dbReference>
<dbReference type="InterPro" id="IPR004754">
    <property type="entry name" value="Amino_acid_antiprt"/>
</dbReference>
<dbReference type="InterPro" id="IPR050367">
    <property type="entry name" value="APC_superfamily"/>
</dbReference>
<dbReference type="NCBIfam" id="TIGR00905">
    <property type="entry name" value="2A0302"/>
    <property type="match status" value="1"/>
</dbReference>
<dbReference type="PANTHER" id="PTHR42770">
    <property type="entry name" value="AMINO ACID TRANSPORTER-RELATED"/>
    <property type="match status" value="1"/>
</dbReference>
<dbReference type="PANTHER" id="PTHR42770:SF4">
    <property type="entry name" value="ARGININE_ORNITHINE ANTIPORTER-RELATED"/>
    <property type="match status" value="1"/>
</dbReference>
<dbReference type="Pfam" id="PF13520">
    <property type="entry name" value="AA_permease_2"/>
    <property type="match status" value="1"/>
</dbReference>
<dbReference type="PIRSF" id="PIRSF006060">
    <property type="entry name" value="AA_transporter"/>
    <property type="match status" value="1"/>
</dbReference>
<gene>
    <name type="primary">ydgI</name>
    <name type="ordered locus">c1997</name>
</gene>
<reference key="1">
    <citation type="journal article" date="2002" name="Proc. Natl. Acad. Sci. U.S.A.">
        <title>Extensive mosaic structure revealed by the complete genome sequence of uropathogenic Escherichia coli.</title>
        <authorList>
            <person name="Welch R.A."/>
            <person name="Burland V."/>
            <person name="Plunkett G. III"/>
            <person name="Redford P."/>
            <person name="Roesch P."/>
            <person name="Rasko D."/>
            <person name="Buckles E.L."/>
            <person name="Liou S.-R."/>
            <person name="Boutin A."/>
            <person name="Hackett J."/>
            <person name="Stroud D."/>
            <person name="Mayhew G.F."/>
            <person name="Rose D.J."/>
            <person name="Zhou S."/>
            <person name="Schwartz D.C."/>
            <person name="Perna N.T."/>
            <person name="Mobley H.L.T."/>
            <person name="Donnenberg M.S."/>
            <person name="Blattner F.R."/>
        </authorList>
    </citation>
    <scope>NUCLEOTIDE SEQUENCE [LARGE SCALE GENOMIC DNA]</scope>
    <source>
        <strain>CFT073 / ATCC 700928 / UPEC</strain>
    </source>
</reference>
<name>ARCD_ECOL6</name>
<comment type="function">
    <text evidence="2">Catalyzes electroneutral exchange between arginine and ornithine to allow high-efficiency energy conversion in the arginine deiminase pathway.</text>
</comment>
<comment type="catalytic activity">
    <reaction evidence="2">
        <text>L-ornithine(in) + L-arginine(out) = L-ornithine(out) + L-arginine(in)</text>
        <dbReference type="Rhea" id="RHEA:34991"/>
        <dbReference type="ChEBI" id="CHEBI:32682"/>
        <dbReference type="ChEBI" id="CHEBI:46911"/>
    </reaction>
    <physiologicalReaction direction="left-to-right" evidence="2">
        <dbReference type="Rhea" id="RHEA:34992"/>
    </physiologicalReaction>
</comment>
<comment type="subcellular location">
    <subcellularLocation>
        <location evidence="1">Cell inner membrane</location>
        <topology evidence="3">Multi-pass membrane protein</topology>
    </subcellularLocation>
</comment>
<comment type="similarity">
    <text evidence="4">Belongs to the amino acid-polyamine-organocation (APC) superfamily. Basic amino acid/polyamine antiporter (APA) (TC 2.A.3.2) family.</text>
</comment>
<comment type="sequence caution" evidence="4">
    <conflict type="erroneous initiation">
        <sequence resource="EMBL-CDS" id="AAN80457"/>
    </conflict>
</comment>
<evidence type="ECO:0000250" key="1">
    <source>
        <dbReference type="UniProtKB" id="P0AAE5"/>
    </source>
</evidence>
<evidence type="ECO:0000250" key="2">
    <source>
        <dbReference type="UniProtKB" id="P18275"/>
    </source>
</evidence>
<evidence type="ECO:0000255" key="3"/>
<evidence type="ECO:0000305" key="4"/>
<organism>
    <name type="scientific">Escherichia coli O6:H1 (strain CFT073 / ATCC 700928 / UPEC)</name>
    <dbReference type="NCBI Taxonomy" id="199310"/>
    <lineage>
        <taxon>Bacteria</taxon>
        <taxon>Pseudomonadati</taxon>
        <taxon>Pseudomonadota</taxon>
        <taxon>Gammaproteobacteria</taxon>
        <taxon>Enterobacterales</taxon>
        <taxon>Enterobacteriaceae</taxon>
        <taxon>Escherichia</taxon>
    </lineage>
</organism>
<keyword id="KW-0029">Amino-acid transport</keyword>
<keyword id="KW-0050">Antiport</keyword>
<keyword id="KW-0997">Cell inner membrane</keyword>
<keyword id="KW-1003">Cell membrane</keyword>
<keyword id="KW-0472">Membrane</keyword>
<keyword id="KW-1185">Reference proteome</keyword>
<keyword id="KW-0812">Transmembrane</keyword>
<keyword id="KW-1133">Transmembrane helix</keyword>
<keyword id="KW-0813">Transport</keyword>
<proteinExistence type="inferred from homology"/>
<feature type="chain" id="PRO_0000054242" description="Putative arginine/ornithine antiporter">
    <location>
        <begin position="1"/>
        <end position="460"/>
    </location>
</feature>
<feature type="topological domain" description="Cytoplasmic" evidence="4">
    <location>
        <begin position="1"/>
        <end position="4"/>
    </location>
</feature>
<feature type="transmembrane region" description="Helical" evidence="3">
    <location>
        <begin position="5"/>
        <end position="25"/>
    </location>
</feature>
<feature type="topological domain" description="Periplasmic" evidence="4">
    <location>
        <begin position="26"/>
        <end position="38"/>
    </location>
</feature>
<feature type="transmembrane region" description="Helical" evidence="3">
    <location>
        <begin position="39"/>
        <end position="59"/>
    </location>
</feature>
<feature type="topological domain" description="Cytoplasmic" evidence="4">
    <location>
        <begin position="60"/>
        <end position="92"/>
    </location>
</feature>
<feature type="transmembrane region" description="Helical" evidence="3">
    <location>
        <begin position="93"/>
        <end position="113"/>
    </location>
</feature>
<feature type="topological domain" description="Periplasmic" evidence="4">
    <location>
        <begin position="114"/>
        <end position="125"/>
    </location>
</feature>
<feature type="transmembrane region" description="Helical" evidence="3">
    <location>
        <begin position="126"/>
        <end position="146"/>
    </location>
</feature>
<feature type="topological domain" description="Cytoplasmic" evidence="4">
    <location>
        <begin position="147"/>
        <end position="157"/>
    </location>
</feature>
<feature type="transmembrane region" description="Helical" evidence="3">
    <location>
        <begin position="158"/>
        <end position="178"/>
    </location>
</feature>
<feature type="topological domain" description="Periplasmic" evidence="4">
    <location>
        <begin position="179"/>
        <end position="201"/>
    </location>
</feature>
<feature type="transmembrane region" description="Helical" evidence="3">
    <location>
        <begin position="202"/>
        <end position="222"/>
    </location>
</feature>
<feature type="topological domain" description="Cytoplasmic" evidence="4">
    <location>
        <begin position="223"/>
        <end position="235"/>
    </location>
</feature>
<feature type="transmembrane region" description="Helical" evidence="3">
    <location>
        <begin position="236"/>
        <end position="256"/>
    </location>
</feature>
<feature type="topological domain" description="Periplasmic" evidence="4">
    <location>
        <begin position="257"/>
        <end position="282"/>
    </location>
</feature>
<feature type="transmembrane region" description="Helical" evidence="3">
    <location>
        <begin position="283"/>
        <end position="303"/>
    </location>
</feature>
<feature type="topological domain" description="Cytoplasmic" evidence="4">
    <location>
        <begin position="304"/>
        <end position="331"/>
    </location>
</feature>
<feature type="transmembrane region" description="Helical" evidence="3">
    <location>
        <begin position="332"/>
        <end position="352"/>
    </location>
</feature>
<feature type="topological domain" description="Periplasmic" evidence="4">
    <location>
        <begin position="353"/>
        <end position="357"/>
    </location>
</feature>
<feature type="transmembrane region" description="Helical" evidence="3">
    <location>
        <begin position="358"/>
        <end position="378"/>
    </location>
</feature>
<feature type="topological domain" description="Cytoplasmic" evidence="4">
    <location>
        <begin position="379"/>
        <end position="384"/>
    </location>
</feature>
<feature type="transmembrane region" description="Helical" evidence="3">
    <location>
        <begin position="385"/>
        <end position="405"/>
    </location>
</feature>
<feature type="transmembrane region" description="Helical" evidence="3">
    <location>
        <begin position="406"/>
        <end position="426"/>
    </location>
</feature>
<feature type="topological domain" description="Cytoplasmic" evidence="4">
    <location>
        <begin position="427"/>
        <end position="439"/>
    </location>
</feature>
<feature type="transmembrane region" description="Helical" evidence="3">
    <location>
        <begin position="440"/>
        <end position="460"/>
    </location>
</feature>
<sequence>MEKKLGLSALTALVLSSMLGAGVFSLPQNMAAVASPAALLIGWGITGAGILLLAFAMLILTRIRPELDGGIFTYAREGFGELIGFCSAWGYWLCAVIANVSYLVIVFSALSFFTDTPELRLFGDGNTWQSIVGASALLWIVHFLILRGVQTAASINLVATLAKLLPLGLFVVLAMMMFKLDTFKLDFTGLALGVPVWEQVKNTMLITLWVFIGVEGAVVVSARARNKRDVGKATLLAVLSALGVYLLVTLLSLGVVARPELAEIRNPSMAGLMVEMMGPWGEIIIAAGLIVSVCGAYLSWTIMAAEVPFLAATHKAFPRIFARQNAQAAPSASLWLTNICVQICLVLIWLTGSDYNTLLTIASEMILVPYFLVGAFLLKIATRPLHKAVGVGACIYGLWLLYASGPMHLLLSVVLYAPGLLVFLYARKTHTHDNVLNRQEMVLIGMLLIASVPATWMLVG</sequence>
<protein>
    <recommendedName>
        <fullName evidence="2">Putative arginine/ornithine antiporter</fullName>
    </recommendedName>
</protein>